<name>WNT7A_GORGO</name>
<protein>
    <recommendedName>
        <fullName>Protein Wnt-7a</fullName>
    </recommendedName>
</protein>
<keyword id="KW-0217">Developmental protein</keyword>
<keyword id="KW-1015">Disulfide bond</keyword>
<keyword id="KW-0272">Extracellular matrix</keyword>
<keyword id="KW-0325">Glycoprotein</keyword>
<keyword id="KW-0449">Lipoprotein</keyword>
<keyword id="KW-1185">Reference proteome</keyword>
<keyword id="KW-0964">Secreted</keyword>
<keyword id="KW-0732">Signal</keyword>
<keyword id="KW-0879">Wnt signaling pathway</keyword>
<reference key="1">
    <citation type="submission" date="2006-01" db="EMBL/GenBank/DDBJ databases">
        <title>WNT7A and limb development.</title>
        <authorList>
            <person name="Stern R."/>
            <person name="Cox J."/>
            <person name="Nicholas A."/>
            <person name="Al-Gazali L."/>
            <person name="Woods G."/>
        </authorList>
    </citation>
    <scope>NUCLEOTIDE SEQUENCE [GENOMIC DNA]</scope>
</reference>
<dbReference type="EMBL" id="DQ367074">
    <property type="protein sequence ID" value="ABE73776.1"/>
    <property type="molecule type" value="Genomic_DNA"/>
</dbReference>
<dbReference type="RefSeq" id="XP_030865343.1">
    <property type="nucleotide sequence ID" value="XM_031009483.3"/>
</dbReference>
<dbReference type="SMR" id="Q1KYK7"/>
<dbReference type="FunCoup" id="Q1KYK7">
    <property type="interactions" value="487"/>
</dbReference>
<dbReference type="STRING" id="9593.ENSGGOP00000012339"/>
<dbReference type="GlyCosmos" id="Q1KYK7">
    <property type="glycosylation" value="3 sites, No reported glycans"/>
</dbReference>
<dbReference type="GeneID" id="101146237"/>
<dbReference type="eggNOG" id="KOG3913">
    <property type="taxonomic scope" value="Eukaryota"/>
</dbReference>
<dbReference type="HOGENOM" id="CLU_033039_1_4_1"/>
<dbReference type="InParanoid" id="Q1KYK7"/>
<dbReference type="Proteomes" id="UP000001519">
    <property type="component" value="Unplaced"/>
</dbReference>
<dbReference type="GO" id="GO:0005615">
    <property type="term" value="C:extracellular space"/>
    <property type="evidence" value="ECO:0000318"/>
    <property type="project" value="GO_Central"/>
</dbReference>
<dbReference type="GO" id="GO:0005125">
    <property type="term" value="F:cytokine activity"/>
    <property type="evidence" value="ECO:0000318"/>
    <property type="project" value="GO_Central"/>
</dbReference>
<dbReference type="GO" id="GO:0005109">
    <property type="term" value="F:frizzled binding"/>
    <property type="evidence" value="ECO:0000318"/>
    <property type="project" value="GO_Central"/>
</dbReference>
<dbReference type="GO" id="GO:0048513">
    <property type="term" value="P:animal organ development"/>
    <property type="evidence" value="ECO:0007669"/>
    <property type="project" value="UniProtKB-ARBA"/>
</dbReference>
<dbReference type="GO" id="GO:0060070">
    <property type="term" value="P:canonical Wnt signaling pathway"/>
    <property type="evidence" value="ECO:0000318"/>
    <property type="project" value="GO_Central"/>
</dbReference>
<dbReference type="GO" id="GO:0045165">
    <property type="term" value="P:cell fate commitment"/>
    <property type="evidence" value="ECO:0000318"/>
    <property type="project" value="GO_Central"/>
</dbReference>
<dbReference type="GO" id="GO:0030182">
    <property type="term" value="P:neuron differentiation"/>
    <property type="evidence" value="ECO:0000318"/>
    <property type="project" value="GO_Central"/>
</dbReference>
<dbReference type="GO" id="GO:0046330">
    <property type="term" value="P:positive regulation of JNK cascade"/>
    <property type="evidence" value="ECO:0000318"/>
    <property type="project" value="GO_Central"/>
</dbReference>
<dbReference type="GO" id="GO:0009888">
    <property type="term" value="P:tissue development"/>
    <property type="evidence" value="ECO:0007669"/>
    <property type="project" value="UniProtKB-ARBA"/>
</dbReference>
<dbReference type="CDD" id="cd19349">
    <property type="entry name" value="Wnt_Wnt7a"/>
    <property type="match status" value="1"/>
</dbReference>
<dbReference type="FunFam" id="3.30.2460.20:FF:000001">
    <property type="entry name" value="Wnt homolog"/>
    <property type="match status" value="1"/>
</dbReference>
<dbReference type="Gene3D" id="3.30.2460.20">
    <property type="match status" value="1"/>
</dbReference>
<dbReference type="InterPro" id="IPR005817">
    <property type="entry name" value="Wnt"/>
</dbReference>
<dbReference type="InterPro" id="IPR013300">
    <property type="entry name" value="Wnt7"/>
</dbReference>
<dbReference type="InterPro" id="IPR043158">
    <property type="entry name" value="Wnt_C"/>
</dbReference>
<dbReference type="InterPro" id="IPR018161">
    <property type="entry name" value="Wnt_CS"/>
</dbReference>
<dbReference type="PANTHER" id="PTHR12027:SF78">
    <property type="entry name" value="PROTEIN WNT-7A"/>
    <property type="match status" value="1"/>
</dbReference>
<dbReference type="PANTHER" id="PTHR12027">
    <property type="entry name" value="WNT RELATED"/>
    <property type="match status" value="1"/>
</dbReference>
<dbReference type="Pfam" id="PF00110">
    <property type="entry name" value="wnt"/>
    <property type="match status" value="1"/>
</dbReference>
<dbReference type="PRINTS" id="PR01891">
    <property type="entry name" value="WNT7PROTEIN"/>
</dbReference>
<dbReference type="PRINTS" id="PR01349">
    <property type="entry name" value="WNTPROTEIN"/>
</dbReference>
<dbReference type="SMART" id="SM00097">
    <property type="entry name" value="WNT1"/>
    <property type="match status" value="1"/>
</dbReference>
<dbReference type="PROSITE" id="PS00246">
    <property type="entry name" value="WNT1"/>
    <property type="match status" value="1"/>
</dbReference>
<comment type="function">
    <text evidence="1 2">Ligand for members of the frizzled family of seven transmembrane receptors that functions in the canonical Wnt/beta-catenin signaling pathway (By similarity). Plays an important role in embryonic development, including dorsal versus ventral patterning during limb development, skeleton development and urogenital tract development. Required for central nervous system (CNS) angiogenesis and blood-brain barrier regulation (By similarity). Required for normal, sexually dimorphic development of the Mullerian ducts, and for normal fertility in both sexes. Required for normal neural stem cell proliferation in the hippocampus dentate gyrus. Required for normal progress through the cell cycle in neural progenitor cells, for self-renewal of neural stem cells, and for normal neuronal differentiation and maturation. Promotes formation of synapses via its interaction with FZD5 (By similarity).</text>
</comment>
<comment type="subunit">
    <text evidence="1 2">Forms a soluble 1:1 complex with AFM; this prevents oligomerization and is required for prolonged biological activity. The complex with AFM may represent the physiological form in body fluids (By similarity). Interacts with PORCN (By similarity). Interacts (via intrinsically disordered linker region) with RECK; interaction with RECK confers ligand selectivity for Wnt7 in brain endothelial cells and allows these cells to selectively respond to Wnt7 (By similarity). Interacts with FZD5 (By similarity).</text>
</comment>
<comment type="subcellular location">
    <subcellularLocation>
        <location evidence="2">Secreted</location>
        <location evidence="2">Extracellular space</location>
        <location evidence="2">Extracellular matrix</location>
    </subcellularLocation>
    <subcellularLocation>
        <location evidence="2">Secreted</location>
    </subcellularLocation>
</comment>
<comment type="domain">
    <text evidence="1">The intrinsically disordered linker region is required for recognition by RECK in brain endothelial cells.</text>
</comment>
<comment type="PTM">
    <text evidence="3 5">Palmitoleoylation is required for efficient binding to frizzled receptors. Depalmitoleoylation leads to Wnt signaling pathway inhibition.</text>
</comment>
<comment type="similarity">
    <text evidence="7">Belongs to the Wnt family.</text>
</comment>
<evidence type="ECO:0000250" key="1">
    <source>
        <dbReference type="UniProtKB" id="O00755"/>
    </source>
</evidence>
<evidence type="ECO:0000250" key="2">
    <source>
        <dbReference type="UniProtKB" id="P24383"/>
    </source>
</evidence>
<evidence type="ECO:0000250" key="3">
    <source>
        <dbReference type="UniProtKB" id="P27467"/>
    </source>
</evidence>
<evidence type="ECO:0000250" key="4">
    <source>
        <dbReference type="UniProtKB" id="P28026"/>
    </source>
</evidence>
<evidence type="ECO:0000250" key="5">
    <source>
        <dbReference type="UniProtKB" id="P56704"/>
    </source>
</evidence>
<evidence type="ECO:0000255" key="6"/>
<evidence type="ECO:0000305" key="7"/>
<feature type="signal peptide" evidence="6">
    <location>
        <begin position="1"/>
        <end position="31"/>
    </location>
</feature>
<feature type="chain" id="PRO_0000245335" description="Protein Wnt-7a">
    <location>
        <begin position="32"/>
        <end position="349"/>
    </location>
</feature>
<feature type="region of interest" description="Disordered linker" evidence="1">
    <location>
        <begin position="238"/>
        <end position="266"/>
    </location>
</feature>
<feature type="lipid moiety-binding region" description="O-palmitoleoyl serine; by PORCN" evidence="5">
    <location>
        <position position="206"/>
    </location>
</feature>
<feature type="glycosylation site" description="N-linked (GlcNAc...) asparagine" evidence="6">
    <location>
        <position position="83"/>
    </location>
</feature>
<feature type="glycosylation site" description="N-linked (GlcNAc...) asparagine" evidence="6">
    <location>
        <position position="127"/>
    </location>
</feature>
<feature type="glycosylation site" description="N-linked (GlcNAc...) asparagine" evidence="6">
    <location>
        <position position="295"/>
    </location>
</feature>
<feature type="disulfide bond" evidence="4">
    <location>
        <begin position="73"/>
        <end position="84"/>
    </location>
</feature>
<feature type="disulfide bond" evidence="4">
    <location>
        <begin position="123"/>
        <end position="131"/>
    </location>
</feature>
<feature type="disulfide bond" evidence="4">
    <location>
        <begin position="133"/>
        <end position="152"/>
    </location>
</feature>
<feature type="disulfide bond" evidence="4">
    <location>
        <begin position="200"/>
        <end position="214"/>
    </location>
</feature>
<feature type="disulfide bond" evidence="4">
    <location>
        <begin position="202"/>
        <end position="209"/>
    </location>
</feature>
<feature type="disulfide bond" evidence="4">
    <location>
        <begin position="278"/>
        <end position="309"/>
    </location>
</feature>
<feature type="disulfide bond" evidence="4">
    <location>
        <begin position="294"/>
        <end position="304"/>
    </location>
</feature>
<feature type="disulfide bond" evidence="4">
    <location>
        <begin position="308"/>
        <end position="348"/>
    </location>
</feature>
<feature type="disulfide bond" evidence="4">
    <location>
        <begin position="324"/>
        <end position="339"/>
    </location>
</feature>
<feature type="disulfide bond" evidence="4">
    <location>
        <begin position="326"/>
        <end position="336"/>
    </location>
</feature>
<feature type="disulfide bond" evidence="4">
    <location>
        <begin position="331"/>
        <end position="332"/>
    </location>
</feature>
<sequence>MNRKARRCLGHLFLSLGMVYLRIGGFSSVVALGASIICNKIPGLAPRQRAICQSRPDAIIVIGEGSQMGLDECQFQFRNGRWNCSALGERTVFGKELKVGSREAAFTYAIIAAGVAHAITAACTQGNLSDCGCDKEKQGQYHRDEGWKWGGCSADIRYGIGFAKVFVDAREIKQNARTLMNLHNNEAGRKILEENMKLECKCHGVSGSCTTKTCWTTLPQFRELGYVLKDKYNEAVHVEPVRASRNKRPTFLKIKKPLSYRKPMDTDLVYIEKSPNYCEEDPVTGSVGTQGRACNKTAPQASGCDLMCCGRGYNTHQYARVWQCNCKFHWCCYVKCNTCSERTEMYTCK</sequence>
<gene>
    <name type="primary">WNT7A</name>
</gene>
<accession>Q1KYK7</accession>
<organism>
    <name type="scientific">Gorilla gorilla gorilla</name>
    <name type="common">Western lowland gorilla</name>
    <dbReference type="NCBI Taxonomy" id="9595"/>
    <lineage>
        <taxon>Eukaryota</taxon>
        <taxon>Metazoa</taxon>
        <taxon>Chordata</taxon>
        <taxon>Craniata</taxon>
        <taxon>Vertebrata</taxon>
        <taxon>Euteleostomi</taxon>
        <taxon>Mammalia</taxon>
        <taxon>Eutheria</taxon>
        <taxon>Euarchontoglires</taxon>
        <taxon>Primates</taxon>
        <taxon>Haplorrhini</taxon>
        <taxon>Catarrhini</taxon>
        <taxon>Hominidae</taxon>
        <taxon>Gorilla</taxon>
    </lineage>
</organism>
<proteinExistence type="inferred from homology"/>